<feature type="signal peptide" evidence="2">
    <location>
        <begin position="1"/>
        <end position="25"/>
    </location>
</feature>
<feature type="chain" id="PRO_0000211834" description="Inverse autotransporter adhesin YeeJ">
    <location>
        <begin position="26"/>
        <end position="2641"/>
    </location>
</feature>
<feature type="domain" description="LysM" evidence="4">
    <location>
        <begin position="50"/>
        <end position="98"/>
    </location>
</feature>
<feature type="domain" description="Big-1 1" evidence="3">
    <location>
        <begin position="617"/>
        <end position="711"/>
    </location>
</feature>
<feature type="domain" description="Big-1 2" evidence="3">
    <location>
        <begin position="721"/>
        <end position="815"/>
    </location>
</feature>
<feature type="domain" description="Big-1 3" evidence="3">
    <location>
        <begin position="822"/>
        <end position="913"/>
    </location>
</feature>
<feature type="domain" description="Big-1 4" evidence="3">
    <location>
        <begin position="920"/>
        <end position="1017"/>
    </location>
</feature>
<feature type="domain" description="Big-1 5" evidence="3">
    <location>
        <begin position="1024"/>
        <end position="1116"/>
    </location>
</feature>
<feature type="domain" description="Big-1 6" evidence="3">
    <location>
        <begin position="1123"/>
        <end position="1220"/>
    </location>
</feature>
<feature type="domain" description="Big-1 7" evidence="3">
    <location>
        <begin position="1227"/>
        <end position="1319"/>
    </location>
</feature>
<feature type="domain" description="Big-1 8" evidence="3">
    <location>
        <begin position="1326"/>
        <end position="1423"/>
    </location>
</feature>
<feature type="domain" description="Big-1 9" evidence="3">
    <location>
        <begin position="1430"/>
        <end position="1523"/>
    </location>
</feature>
<feature type="domain" description="Big-1 10" evidence="3">
    <location>
        <begin position="1531"/>
        <end position="1633"/>
    </location>
</feature>
<feature type="domain" description="Big-1 11" evidence="3">
    <location>
        <begin position="1641"/>
        <end position="1734"/>
    </location>
</feature>
<feature type="domain" description="Big-1 12" evidence="3">
    <location>
        <begin position="1741"/>
        <end position="1837"/>
    </location>
</feature>
<feature type="domain" description="Big-1 13" evidence="3">
    <location>
        <begin position="1844"/>
        <end position="1941"/>
    </location>
</feature>
<feature type="domain" description="Big-1 14" evidence="3">
    <location>
        <begin position="1948"/>
        <end position="2032"/>
    </location>
</feature>
<feature type="domain" description="Big-1 15" evidence="3">
    <location>
        <begin position="2048"/>
        <end position="2141"/>
    </location>
</feature>
<feature type="domain" description="Big-1 16" evidence="3">
    <location>
        <begin position="2142"/>
        <end position="2235"/>
    </location>
</feature>
<feature type="domain" description="Big-1 17" evidence="3">
    <location>
        <begin position="2244"/>
        <end position="2336"/>
    </location>
</feature>
<feature type="region of interest" description="Inverse autotransporter">
    <location>
        <begin position="125"/>
        <end position="400"/>
    </location>
</feature>
<feature type="region of interest" description="Invasin 3 domain">
    <location>
        <begin position="513"/>
        <end position="605"/>
    </location>
</feature>
<feature type="region of interest" description="C-type lectin domain">
    <location>
        <begin position="2538"/>
        <end position="2641"/>
    </location>
</feature>
<keyword id="KW-0130">Cell adhesion</keyword>
<keyword id="KW-0998">Cell outer membrane</keyword>
<keyword id="KW-0472">Membrane</keyword>
<keyword id="KW-0677">Repeat</keyword>
<keyword id="KW-0732">Signal</keyword>
<evidence type="ECO:0000250" key="1">
    <source>
        <dbReference type="UniProtKB" id="P76347"/>
    </source>
</evidence>
<evidence type="ECO:0000255" key="2"/>
<evidence type="ECO:0000255" key="3">
    <source>
        <dbReference type="PROSITE-ProRule" id="PRU00445"/>
    </source>
</evidence>
<evidence type="ECO:0000255" key="4">
    <source>
        <dbReference type="PROSITE-ProRule" id="PRU01118"/>
    </source>
</evidence>
<evidence type="ECO:0000305" key="5"/>
<organism>
    <name type="scientific">Escherichia coli O157:H7</name>
    <dbReference type="NCBI Taxonomy" id="83334"/>
    <lineage>
        <taxon>Bacteria</taxon>
        <taxon>Pseudomonadati</taxon>
        <taxon>Pseudomonadota</taxon>
        <taxon>Gammaproteobacteria</taxon>
        <taxon>Enterobacterales</taxon>
        <taxon>Enterobacteriaceae</taxon>
        <taxon>Escherichia</taxon>
    </lineage>
</organism>
<protein>
    <recommendedName>
        <fullName evidence="5">Inverse autotransporter adhesin YeeJ</fullName>
    </recommendedName>
</protein>
<proteinExistence type="inferred from homology"/>
<comment type="function">
    <text evidence="1">A probable inverse autotransporter, it may be involved in biofilm formation and cell adhesion. May bind peptidoglycan via its LysM domain.</text>
</comment>
<comment type="subcellular location">
    <subcellularLocation>
        <location evidence="1">Cell outer membrane</location>
    </subcellularLocation>
    <text evidence="1">The passenger domain (approximately residues 401-2641) is exposed on the cell surface, and may be processed and released to the extracellular milieu.</text>
</comment>
<comment type="domain">
    <text evidence="1">Has a signal sequence, a Lys M domain, an inverse autotransporter domain (residues 125-400) predicted to form a 12-stranded beta-barrel, followed by the passenger domain with an invasin 3 domain (residues 513-605), 17 Big-1 domains and a C-type lectin domain (resides 2538-2641).</text>
</comment>
<comment type="miscellaneous">
    <text evidence="5">'Inverse' autotransporters have an N-terminal translocation domain followed by the passenger domain, as opposed to 'classical' autotransporters which have N-terminal passenger and C-terminal translocation domains.</text>
</comment>
<comment type="similarity">
    <text evidence="5">Belongs to the intimin/invasin family.</text>
</comment>
<comment type="sequence caution" evidence="1">
    <conflict type="erroneous initiation">
        <sequence resource="EMBL-CDS" id="AAG57041"/>
    </conflict>
    <text>Extended N-terminus.</text>
</comment>
<gene>
    <name type="primary">yeeJ</name>
    <name type="ordered locus">Z3135</name>
</gene>
<dbReference type="EMBL" id="AE005174">
    <property type="protein sequence ID" value="AAG57041.1"/>
    <property type="status" value="ALT_INIT"/>
    <property type="molecule type" value="Genomic_DNA"/>
</dbReference>
<dbReference type="PIR" id="E85822">
    <property type="entry name" value="E85822"/>
</dbReference>
<dbReference type="PIR" id="G90975">
    <property type="entry name" value="G90975"/>
</dbReference>
<dbReference type="PIR" id="H90975">
    <property type="entry name" value="H90975"/>
</dbReference>
<dbReference type="SMR" id="Q8X8V7"/>
<dbReference type="STRING" id="155864.Z3135"/>
<dbReference type="KEGG" id="ece:Z3135"/>
<dbReference type="PATRIC" id="fig|386585.9.peg.2907"/>
<dbReference type="eggNOG" id="COG1388">
    <property type="taxonomic scope" value="Bacteria"/>
</dbReference>
<dbReference type="eggNOG" id="COG2373">
    <property type="taxonomic scope" value="Bacteria"/>
</dbReference>
<dbReference type="eggNOG" id="COG4932">
    <property type="taxonomic scope" value="Bacteria"/>
</dbReference>
<dbReference type="HOGENOM" id="CLU_000210_1_2_6"/>
<dbReference type="Proteomes" id="UP000002519">
    <property type="component" value="Chromosome"/>
</dbReference>
<dbReference type="GO" id="GO:0009279">
    <property type="term" value="C:cell outer membrane"/>
    <property type="evidence" value="ECO:0007669"/>
    <property type="project" value="UniProtKB-SubCell"/>
</dbReference>
<dbReference type="GO" id="GO:0007155">
    <property type="term" value="P:cell adhesion"/>
    <property type="evidence" value="ECO:0007669"/>
    <property type="project" value="UniProtKB-KW"/>
</dbReference>
<dbReference type="FunFam" id="2.60.40.10:FF:000182">
    <property type="entry name" value="Gamma intimin"/>
    <property type="match status" value="7"/>
</dbReference>
<dbReference type="FunFam" id="2.40.160.160:FF:000001">
    <property type="entry name" value="Intimin-like inverse autotransporter SinH"/>
    <property type="match status" value="1"/>
</dbReference>
<dbReference type="FunFam" id="2.60.40.10:FF:002045">
    <property type="entry name" value="Putative adhesin"/>
    <property type="match status" value="1"/>
</dbReference>
<dbReference type="Gene3D" id="2.60.40.1080">
    <property type="match status" value="1"/>
</dbReference>
<dbReference type="Gene3D" id="2.60.40.10">
    <property type="entry name" value="Immunoglobulins"/>
    <property type="match status" value="19"/>
</dbReference>
<dbReference type="Gene3D" id="2.40.160.160">
    <property type="entry name" value="Inverse autotransporter, beta-domain"/>
    <property type="match status" value="1"/>
</dbReference>
<dbReference type="Gene3D" id="3.10.100.10">
    <property type="entry name" value="Mannose-Binding Protein A, subunit A"/>
    <property type="match status" value="1"/>
</dbReference>
<dbReference type="InterPro" id="IPR003344">
    <property type="entry name" value="Big_1_dom"/>
</dbReference>
<dbReference type="InterPro" id="IPR016186">
    <property type="entry name" value="C-type_lectin-like/link_sf"/>
</dbReference>
<dbReference type="InterPro" id="IPR024519">
    <property type="entry name" value="IAT_beta"/>
</dbReference>
<dbReference type="InterPro" id="IPR038177">
    <property type="entry name" value="IAT_beta_sf"/>
</dbReference>
<dbReference type="InterPro" id="IPR013783">
    <property type="entry name" value="Ig-like_fold"/>
</dbReference>
<dbReference type="InterPro" id="IPR051715">
    <property type="entry name" value="Intimin-Invasin_domain"/>
</dbReference>
<dbReference type="InterPro" id="IPR003535">
    <property type="entry name" value="Intimin/invasin_bac"/>
</dbReference>
<dbReference type="InterPro" id="IPR008964">
    <property type="entry name" value="Invasin/intimin_cell_adhesion"/>
</dbReference>
<dbReference type="InterPro" id="IPR015217">
    <property type="entry name" value="Invasin_dom_3"/>
</dbReference>
<dbReference type="InterPro" id="IPR018392">
    <property type="entry name" value="LysM_dom"/>
</dbReference>
<dbReference type="InterPro" id="IPR022409">
    <property type="entry name" value="PKD/Chitinase_dom"/>
</dbReference>
<dbReference type="PANTHER" id="PTHR39576:SF2">
    <property type="entry name" value="ATTACHING AND EFFACING PROTEIN HOMOLOG-RELATED"/>
    <property type="match status" value="1"/>
</dbReference>
<dbReference type="PANTHER" id="PTHR39576">
    <property type="entry name" value="ATTACHING AND EFFACING PROTEIN HOMOLOG-RELATED-RELATED"/>
    <property type="match status" value="1"/>
</dbReference>
<dbReference type="Pfam" id="PF02369">
    <property type="entry name" value="Big_1"/>
    <property type="match status" value="16"/>
</dbReference>
<dbReference type="Pfam" id="PF11924">
    <property type="entry name" value="IAT_beta"/>
    <property type="match status" value="1"/>
</dbReference>
<dbReference type="Pfam" id="PF09134">
    <property type="entry name" value="Invasin_D3"/>
    <property type="match status" value="1"/>
</dbReference>
<dbReference type="PRINTS" id="PR01369">
    <property type="entry name" value="INTIMIN"/>
</dbReference>
<dbReference type="SMART" id="SM00634">
    <property type="entry name" value="BID_1"/>
    <property type="match status" value="16"/>
</dbReference>
<dbReference type="SMART" id="SM00089">
    <property type="entry name" value="PKD"/>
    <property type="match status" value="5"/>
</dbReference>
<dbReference type="SUPFAM" id="SSF49373">
    <property type="entry name" value="Invasin/intimin cell-adhesion fragments"/>
    <property type="match status" value="20"/>
</dbReference>
<dbReference type="PROSITE" id="PS51127">
    <property type="entry name" value="BIG1"/>
    <property type="match status" value="17"/>
</dbReference>
<dbReference type="PROSITE" id="PS51782">
    <property type="entry name" value="LYSM"/>
    <property type="match status" value="1"/>
</dbReference>
<sequence length="2641" mass="277932">MGIKLRRLTAGICLITQLVFPMAAAAQGVVNAATQQPVPAQIAIANANTVPYTLGALESAQSVAERFGISVAELRKLNQFRTFARGFDNVRQGDELDVPAQVSENNLTPPPGNSSGNLEQQIASTSQQIGSLLAEDMNSEQAANMARGWASSQASGAMTDWLSRFGTARITLGVDEDFSLKNSQFDFLHPWYETPDNLFFSQHTLHRTDERTQINNGLGWRHFTPTWMSGINFFFDHDLSRYHSRAGIGAEYWRDYLKLSSNGYLRLTNWRSAPELDNDYEARPANGWDVRAEGWLPAWPHLGGKLVYEQYYGDEVALFDKDDRQSNPHAITAGLNYTPFPLMTFSAEQRQGKQGENDTRFAVDFTWQPGSAMQKQLDPNEVDARRSLAGSRFDLVDRNNNIVLEYRKKELVRLTLTDPVTGKSGEVKSLVSSLQTKYALKGYNVEATALEAAGGKVVTTGKDILVTLPAYRFTSTPETDNTWPIEVTAEDVKGNFSNREQSMVVVQAPTLSQKDSSVSLSSQTLSADSHSTATLTFIAHDAAGNPVIGLVLSTRHEGVQDITLSDWKDNGDGSYTQILTTGAMSGTLTLMPQLNGVDAAKAPAVVNIISVSSSRTHSSIKIDKDRYLSGNPIEVTVELRDENDKPVKEQKQQLNTAVSIDNVKPGVTTDWKETADGVYKATYTAYTKGSGLTAKLLMQNWNEDLHTAGFIIDANPQSAKIATLSASNNGVLANENAANTVSVNVADEGSNPINDHTVTFAVLSGSATSFNNQNTAKTDVNGLATFDLKSSKQEDNTVEVTLENGVKQTLIVSFVGDSSTAQVDLQKSKNEVVADGNDSATMTATVRDAKGNLLNDVKVTFNVNSAAAKLSQTEVNSHDGIATATLTSLKNGDYTVTASVSSGSQANQQVIFIGDQSTAALTLSVPSGDITVTNTAPLHMTATLQDKNGNPLKDKEITFSVPNDVASRFSISNSGKGMTDSNGTAIASLTGTLAGTHMITARLANSNVSDTQPMTFVADKDRAVVVLQTSKAEIIGNGVDETTLTATVKDPFDNVVKNLSVVFRTSPADTQLSLNARNTNENGIAEVTLKGTVLGVHTAEAILLNGNRDTKIVNIAPDASNAQVTLNIPAQQVVTNNSDSVQLTATVKDPSNHPVAGITVNFTMPQDVAANFTLENNGIAITQANGEAHVTLKGKKAGTHTVTATLGNNNASDAQPVTFVADKDSAVVVLQTSKAEIIGNGVDETTLTATVKDPFDNAVKDLQVTFSTNPADTQLSQSKSNTNDSGVAEVTFKGTVLGVHTAEATLPNGNNDTKIVNIAPDASNAQVTLNIPAQQVVTNNSDSVQLTATVKDPSNHPVAGITVNFTMPQDVAANFTLENNGIAITQANGEAHVTLKGKKAGTHTVTATLSNNNTSDSQPVTFVADKTSALVVLQISKNEITGNGVDSATLTATVKDQFDNEVNNLPVTFSTASSGLTLTPGESNTNESGIAQATLAGVAFGEQTVTASLANNGASDNKTVHFIGDTAAAKIIELTPVPDSIIAGTPQNSSGSVITATVVDNNGFPVKGVTVNFTSNAATAEMTNGGQAVTNEQGKATVTYTNTRSSIESGARPDTVEASLENGSSTLSTSINVNADASTAHLTLLQALFDTVSAGDTTNLYIEVKDNYGNGVPQQEVTLSVSPSEGVTPSNNAIYTTNHDGNFYASFTATKAGVYQVTATLENGDSMQQTVTYVPNVANAEISLAASKDPVIANNNDLTTLTATVADTEGNAIANSEVTFTLPEDVRANFTLGDGGKVVTDTEGKAKVTLKGTKAGAHTVTASMAGGKSEQLVVNFIADTLTAQVNLNVTEDNFIANNVGMTRLQATVTDGNGNPLANEAVTFTLPADVSASFTLGQGGSAITDINGKAEVTLSGTKSGTYPVTVSVNNYGVSDTKQVTLIADAGTAKLASLTSVYSFVVSTTEGATMTASVTDANGNPVEGIKVNFRGTSVTLSSTSVETDDRGFAEILVTSTEVGLKTVSASLADKPTEVISRLLNAKADINSATITSLEIPEGQVMVAQDVAVKAHVNDQFGNPILNESVTFSAEPPEHMTISQNIVSTDTHGIAEVTMTPERNGSYMVKASLANGSSYEKDLVVIDQKLTLSASSPLIGVNSPTGATLTATLTSANGTPVEGQVINFSVTPEGATLSGGKVRTNSSGQAPVVLTSNKVGTYTVTASFHNGVTIQTQTIVKVTGNSSTAHVASFIADPSTIAATNSDLSTLKATVEDGSGNLIEGLTVYFALKSGSATLTSLTAVTDQNGIATTSVRGAITGSVTVSAVTTAGGMQTVDITLVAGPADASQSVLKNNRSSLKGDFTDSAELHLVLHDISGNPIKVSEGLEFVQSGTNAPYVQVSAIDYSKNFSGEYKATVTGGGEGIATLIPVLNGVHQAGLSTTIQFTRAEDKIMSGTVLVNGANLPTTTFPSQGFTGAYYQLNNDNFAPGKTAADYEFSSSASWVDVDATGKVTFKNVGSKWERITATPKTGGPSYIYEIRVKSWWVNAGDAFMIYSLAENFCSSNGYTLPLGDHLNHSRSRGIGSLYSEWGDMGHYTTEAGFHSNMYWSSSPANSNEQYVVSLATGDQSVFEKLGFAYATCYKNL</sequence>
<accession>Q8X8V7</accession>
<accession>Q8X2B9</accession>
<accession>Q8X2C0</accession>
<name>YEEJ_ECO57</name>
<reference key="1">
    <citation type="journal article" date="2001" name="Nature">
        <title>Genome sequence of enterohaemorrhagic Escherichia coli O157:H7.</title>
        <authorList>
            <person name="Perna N.T."/>
            <person name="Plunkett G. III"/>
            <person name="Burland V."/>
            <person name="Mau B."/>
            <person name="Glasner J.D."/>
            <person name="Rose D.J."/>
            <person name="Mayhew G.F."/>
            <person name="Evans P.S."/>
            <person name="Gregor J."/>
            <person name="Kirkpatrick H.A."/>
            <person name="Posfai G."/>
            <person name="Hackett J."/>
            <person name="Klink S."/>
            <person name="Boutin A."/>
            <person name="Shao Y."/>
            <person name="Miller L."/>
            <person name="Grotbeck E.J."/>
            <person name="Davis N.W."/>
            <person name="Lim A."/>
            <person name="Dimalanta E.T."/>
            <person name="Potamousis K."/>
            <person name="Apodaca J."/>
            <person name="Anantharaman T.S."/>
            <person name="Lin J."/>
            <person name="Yen G."/>
            <person name="Schwartz D.C."/>
            <person name="Welch R.A."/>
            <person name="Blattner F.R."/>
        </authorList>
    </citation>
    <scope>NUCLEOTIDE SEQUENCE [LARGE SCALE GENOMIC DNA]</scope>
    <source>
        <strain>O157:H7 / EDL933 / ATCC 700927 / EHEC</strain>
    </source>
</reference>